<name>APT_BURVG</name>
<gene>
    <name evidence="1" type="primary">apt</name>
    <name type="ordered locus">Bcep1808_2889</name>
</gene>
<dbReference type="EC" id="2.4.2.7" evidence="1"/>
<dbReference type="EMBL" id="CP000614">
    <property type="protein sequence ID" value="ABO55880.1"/>
    <property type="molecule type" value="Genomic_DNA"/>
</dbReference>
<dbReference type="SMR" id="A4JHX7"/>
<dbReference type="KEGG" id="bvi:Bcep1808_2889"/>
<dbReference type="eggNOG" id="COG0503">
    <property type="taxonomic scope" value="Bacteria"/>
</dbReference>
<dbReference type="HOGENOM" id="CLU_063339_3_0_4"/>
<dbReference type="UniPathway" id="UPA00588">
    <property type="reaction ID" value="UER00646"/>
</dbReference>
<dbReference type="Proteomes" id="UP000002287">
    <property type="component" value="Chromosome 1"/>
</dbReference>
<dbReference type="GO" id="GO:0005829">
    <property type="term" value="C:cytosol"/>
    <property type="evidence" value="ECO:0007669"/>
    <property type="project" value="TreeGrafter"/>
</dbReference>
<dbReference type="GO" id="GO:0003999">
    <property type="term" value="F:adenine phosphoribosyltransferase activity"/>
    <property type="evidence" value="ECO:0007669"/>
    <property type="project" value="UniProtKB-UniRule"/>
</dbReference>
<dbReference type="GO" id="GO:0006168">
    <property type="term" value="P:adenine salvage"/>
    <property type="evidence" value="ECO:0007669"/>
    <property type="project" value="InterPro"/>
</dbReference>
<dbReference type="GO" id="GO:0044209">
    <property type="term" value="P:AMP salvage"/>
    <property type="evidence" value="ECO:0007669"/>
    <property type="project" value="UniProtKB-UniRule"/>
</dbReference>
<dbReference type="GO" id="GO:0006166">
    <property type="term" value="P:purine ribonucleoside salvage"/>
    <property type="evidence" value="ECO:0007669"/>
    <property type="project" value="UniProtKB-KW"/>
</dbReference>
<dbReference type="CDD" id="cd06223">
    <property type="entry name" value="PRTases_typeI"/>
    <property type="match status" value="1"/>
</dbReference>
<dbReference type="FunFam" id="3.40.50.2020:FF:000021">
    <property type="entry name" value="Adenine phosphoribosyltransferase"/>
    <property type="match status" value="1"/>
</dbReference>
<dbReference type="Gene3D" id="3.40.50.2020">
    <property type="match status" value="1"/>
</dbReference>
<dbReference type="HAMAP" id="MF_00004">
    <property type="entry name" value="Aden_phosphoribosyltr"/>
    <property type="match status" value="1"/>
</dbReference>
<dbReference type="InterPro" id="IPR005764">
    <property type="entry name" value="Ade_phspho_trans"/>
</dbReference>
<dbReference type="InterPro" id="IPR050120">
    <property type="entry name" value="Adenine_PRTase"/>
</dbReference>
<dbReference type="InterPro" id="IPR000836">
    <property type="entry name" value="PRibTrfase_dom"/>
</dbReference>
<dbReference type="InterPro" id="IPR029057">
    <property type="entry name" value="PRTase-like"/>
</dbReference>
<dbReference type="NCBIfam" id="TIGR01090">
    <property type="entry name" value="apt"/>
    <property type="match status" value="1"/>
</dbReference>
<dbReference type="NCBIfam" id="NF002634">
    <property type="entry name" value="PRK02304.1-3"/>
    <property type="match status" value="1"/>
</dbReference>
<dbReference type="NCBIfam" id="NF002636">
    <property type="entry name" value="PRK02304.1-5"/>
    <property type="match status" value="1"/>
</dbReference>
<dbReference type="PANTHER" id="PTHR11776">
    <property type="entry name" value="ADENINE PHOSPHORIBOSYLTRANSFERASE"/>
    <property type="match status" value="1"/>
</dbReference>
<dbReference type="PANTHER" id="PTHR11776:SF7">
    <property type="entry name" value="PHOSPHORIBOSYLTRANSFERASE DOMAIN-CONTAINING PROTEIN"/>
    <property type="match status" value="1"/>
</dbReference>
<dbReference type="Pfam" id="PF00156">
    <property type="entry name" value="Pribosyltran"/>
    <property type="match status" value="1"/>
</dbReference>
<dbReference type="SUPFAM" id="SSF53271">
    <property type="entry name" value="PRTase-like"/>
    <property type="match status" value="1"/>
</dbReference>
<dbReference type="PROSITE" id="PS00103">
    <property type="entry name" value="PUR_PYR_PR_TRANSFER"/>
    <property type="match status" value="1"/>
</dbReference>
<organism>
    <name type="scientific">Burkholderia vietnamiensis (strain G4 / LMG 22486)</name>
    <name type="common">Burkholderia cepacia (strain R1808)</name>
    <dbReference type="NCBI Taxonomy" id="269482"/>
    <lineage>
        <taxon>Bacteria</taxon>
        <taxon>Pseudomonadati</taxon>
        <taxon>Pseudomonadota</taxon>
        <taxon>Betaproteobacteria</taxon>
        <taxon>Burkholderiales</taxon>
        <taxon>Burkholderiaceae</taxon>
        <taxon>Burkholderia</taxon>
        <taxon>Burkholderia cepacia complex</taxon>
    </lineage>
</organism>
<comment type="function">
    <text evidence="1">Catalyzes a salvage reaction resulting in the formation of AMP, that is energically less costly than de novo synthesis.</text>
</comment>
<comment type="catalytic activity">
    <reaction evidence="1">
        <text>AMP + diphosphate = 5-phospho-alpha-D-ribose 1-diphosphate + adenine</text>
        <dbReference type="Rhea" id="RHEA:16609"/>
        <dbReference type="ChEBI" id="CHEBI:16708"/>
        <dbReference type="ChEBI" id="CHEBI:33019"/>
        <dbReference type="ChEBI" id="CHEBI:58017"/>
        <dbReference type="ChEBI" id="CHEBI:456215"/>
        <dbReference type="EC" id="2.4.2.7"/>
    </reaction>
</comment>
<comment type="pathway">
    <text evidence="1">Purine metabolism; AMP biosynthesis via salvage pathway; AMP from adenine: step 1/1.</text>
</comment>
<comment type="subunit">
    <text evidence="1">Homodimer.</text>
</comment>
<comment type="subcellular location">
    <subcellularLocation>
        <location evidence="1">Cytoplasm</location>
    </subcellularLocation>
</comment>
<comment type="similarity">
    <text evidence="1">Belongs to the purine/pyrimidine phosphoribosyltransferase family.</text>
</comment>
<accession>A4JHX7</accession>
<feature type="chain" id="PRO_0000321351" description="Adenine phosphoribosyltransferase">
    <location>
        <begin position="1"/>
        <end position="188"/>
    </location>
</feature>
<keyword id="KW-0963">Cytoplasm</keyword>
<keyword id="KW-0328">Glycosyltransferase</keyword>
<keyword id="KW-0660">Purine salvage</keyword>
<keyword id="KW-0808">Transferase</keyword>
<proteinExistence type="inferred from homology"/>
<protein>
    <recommendedName>
        <fullName evidence="1">Adenine phosphoribosyltransferase</fullName>
        <shortName evidence="1">APRT</shortName>
        <ecNumber evidence="1">2.4.2.7</ecNumber>
    </recommendedName>
</protein>
<evidence type="ECO:0000255" key="1">
    <source>
        <dbReference type="HAMAP-Rule" id="MF_00004"/>
    </source>
</evidence>
<reference key="1">
    <citation type="submission" date="2007-03" db="EMBL/GenBank/DDBJ databases">
        <title>Complete sequence of chromosome 1 of Burkholderia vietnamiensis G4.</title>
        <authorList>
            <consortium name="US DOE Joint Genome Institute"/>
            <person name="Copeland A."/>
            <person name="Lucas S."/>
            <person name="Lapidus A."/>
            <person name="Barry K."/>
            <person name="Detter J.C."/>
            <person name="Glavina del Rio T."/>
            <person name="Hammon N."/>
            <person name="Israni S."/>
            <person name="Dalin E."/>
            <person name="Tice H."/>
            <person name="Pitluck S."/>
            <person name="Chain P."/>
            <person name="Malfatti S."/>
            <person name="Shin M."/>
            <person name="Vergez L."/>
            <person name="Schmutz J."/>
            <person name="Larimer F."/>
            <person name="Land M."/>
            <person name="Hauser L."/>
            <person name="Kyrpides N."/>
            <person name="Tiedje J."/>
            <person name="Richardson P."/>
        </authorList>
    </citation>
    <scope>NUCLEOTIDE SEQUENCE [LARGE SCALE GENOMIC DNA]</scope>
    <source>
        <strain>G4 / LMG 22486</strain>
    </source>
</reference>
<sequence>MPHSSSGAPLDPVAFIHSQIRTVPDWPQPGVMFRDITTLLQSPKALRILVDLFVERYVDAKLDYVAGLDARGFIIAPIVAYELSVGFVPIRKVGKLPYKTCSESYDLEYGSATVEIHEDACRPGDRVIIMDDLIATGGTMMAGRNLLQRLGAVVVEGAAIIDLPDLGGSTLLRNAGLPIYTVTEFAGH</sequence>